<evidence type="ECO:0000255" key="1">
    <source>
        <dbReference type="HAMAP-Rule" id="MF_00210"/>
    </source>
</evidence>
<feature type="chain" id="PRO_1000124691" description="3-phosphoshikimate 1-carboxyvinyltransferase">
    <location>
        <begin position="1"/>
        <end position="428"/>
    </location>
</feature>
<feature type="active site" description="Proton acceptor" evidence="1">
    <location>
        <position position="314"/>
    </location>
</feature>
<feature type="binding site" evidence="1">
    <location>
        <position position="20"/>
    </location>
    <ligand>
        <name>3-phosphoshikimate</name>
        <dbReference type="ChEBI" id="CHEBI:145989"/>
    </ligand>
</feature>
<feature type="binding site" evidence="1">
    <location>
        <position position="20"/>
    </location>
    <ligand>
        <name>phosphoenolpyruvate</name>
        <dbReference type="ChEBI" id="CHEBI:58702"/>
    </ligand>
</feature>
<feature type="binding site" evidence="1">
    <location>
        <position position="21"/>
    </location>
    <ligand>
        <name>3-phosphoshikimate</name>
        <dbReference type="ChEBI" id="CHEBI:145989"/>
    </ligand>
</feature>
<feature type="binding site" evidence="1">
    <location>
        <position position="25"/>
    </location>
    <ligand>
        <name>3-phosphoshikimate</name>
        <dbReference type="ChEBI" id="CHEBI:145989"/>
    </ligand>
</feature>
<feature type="binding site" evidence="1">
    <location>
        <position position="92"/>
    </location>
    <ligand>
        <name>phosphoenolpyruvate</name>
        <dbReference type="ChEBI" id="CHEBI:58702"/>
    </ligand>
</feature>
<feature type="binding site" evidence="1">
    <location>
        <position position="120"/>
    </location>
    <ligand>
        <name>phosphoenolpyruvate</name>
        <dbReference type="ChEBI" id="CHEBI:58702"/>
    </ligand>
</feature>
<feature type="binding site" evidence="1">
    <location>
        <position position="166"/>
    </location>
    <ligand>
        <name>3-phosphoshikimate</name>
        <dbReference type="ChEBI" id="CHEBI:145989"/>
    </ligand>
</feature>
<feature type="binding site" evidence="1">
    <location>
        <position position="168"/>
    </location>
    <ligand>
        <name>3-phosphoshikimate</name>
        <dbReference type="ChEBI" id="CHEBI:145989"/>
    </ligand>
</feature>
<feature type="binding site" evidence="1">
    <location>
        <position position="168"/>
    </location>
    <ligand>
        <name>phosphoenolpyruvate</name>
        <dbReference type="ChEBI" id="CHEBI:58702"/>
    </ligand>
</feature>
<feature type="binding site" evidence="1">
    <location>
        <position position="314"/>
    </location>
    <ligand>
        <name>3-phosphoshikimate</name>
        <dbReference type="ChEBI" id="CHEBI:145989"/>
    </ligand>
</feature>
<feature type="binding site" evidence="1">
    <location>
        <position position="341"/>
    </location>
    <ligand>
        <name>3-phosphoshikimate</name>
        <dbReference type="ChEBI" id="CHEBI:145989"/>
    </ligand>
</feature>
<feature type="binding site" evidence="1">
    <location>
        <position position="345"/>
    </location>
    <ligand>
        <name>phosphoenolpyruvate</name>
        <dbReference type="ChEBI" id="CHEBI:58702"/>
    </ligand>
</feature>
<feature type="binding site" evidence="1">
    <location>
        <position position="387"/>
    </location>
    <ligand>
        <name>phosphoenolpyruvate</name>
        <dbReference type="ChEBI" id="CHEBI:58702"/>
    </ligand>
</feature>
<keyword id="KW-0028">Amino-acid biosynthesis</keyword>
<keyword id="KW-0057">Aromatic amino acid biosynthesis</keyword>
<keyword id="KW-0963">Cytoplasm</keyword>
<keyword id="KW-0808">Transferase</keyword>
<dbReference type="EC" id="2.5.1.19" evidence="1"/>
<dbReference type="EMBL" id="CP001175">
    <property type="protein sequence ID" value="ACK38989.1"/>
    <property type="molecule type" value="Genomic_DNA"/>
</dbReference>
<dbReference type="RefSeq" id="WP_012581065.1">
    <property type="nucleotide sequence ID" value="NC_011660.1"/>
</dbReference>
<dbReference type="SMR" id="B8DC03"/>
<dbReference type="KEGG" id="lmh:LMHCC_0633"/>
<dbReference type="HOGENOM" id="CLU_024321_0_1_9"/>
<dbReference type="UniPathway" id="UPA00053">
    <property type="reaction ID" value="UER00089"/>
</dbReference>
<dbReference type="GO" id="GO:0005737">
    <property type="term" value="C:cytoplasm"/>
    <property type="evidence" value="ECO:0007669"/>
    <property type="project" value="UniProtKB-SubCell"/>
</dbReference>
<dbReference type="GO" id="GO:0003866">
    <property type="term" value="F:3-phosphoshikimate 1-carboxyvinyltransferase activity"/>
    <property type="evidence" value="ECO:0007669"/>
    <property type="project" value="UniProtKB-UniRule"/>
</dbReference>
<dbReference type="GO" id="GO:0008652">
    <property type="term" value="P:amino acid biosynthetic process"/>
    <property type="evidence" value="ECO:0007669"/>
    <property type="project" value="UniProtKB-KW"/>
</dbReference>
<dbReference type="GO" id="GO:0009073">
    <property type="term" value="P:aromatic amino acid family biosynthetic process"/>
    <property type="evidence" value="ECO:0007669"/>
    <property type="project" value="UniProtKB-KW"/>
</dbReference>
<dbReference type="GO" id="GO:0009423">
    <property type="term" value="P:chorismate biosynthetic process"/>
    <property type="evidence" value="ECO:0007669"/>
    <property type="project" value="UniProtKB-UniRule"/>
</dbReference>
<dbReference type="CDD" id="cd01556">
    <property type="entry name" value="EPSP_synthase"/>
    <property type="match status" value="1"/>
</dbReference>
<dbReference type="FunFam" id="3.65.10.10:FF:000005">
    <property type="entry name" value="3-phosphoshikimate 1-carboxyvinyltransferase"/>
    <property type="match status" value="1"/>
</dbReference>
<dbReference type="FunFam" id="3.65.10.10:FF:000006">
    <property type="entry name" value="3-phosphoshikimate 1-carboxyvinyltransferase"/>
    <property type="match status" value="1"/>
</dbReference>
<dbReference type="Gene3D" id="3.65.10.10">
    <property type="entry name" value="Enolpyruvate transferase domain"/>
    <property type="match status" value="2"/>
</dbReference>
<dbReference type="HAMAP" id="MF_00210">
    <property type="entry name" value="EPSP_synth"/>
    <property type="match status" value="1"/>
</dbReference>
<dbReference type="InterPro" id="IPR001986">
    <property type="entry name" value="Enolpyruvate_Tfrase_dom"/>
</dbReference>
<dbReference type="InterPro" id="IPR036968">
    <property type="entry name" value="Enolpyruvate_Tfrase_sf"/>
</dbReference>
<dbReference type="InterPro" id="IPR006264">
    <property type="entry name" value="EPSP_synthase"/>
</dbReference>
<dbReference type="InterPro" id="IPR023193">
    <property type="entry name" value="EPSP_synthase_CS"/>
</dbReference>
<dbReference type="InterPro" id="IPR013792">
    <property type="entry name" value="RNA3'P_cycl/enolpyr_Trfase_a/b"/>
</dbReference>
<dbReference type="NCBIfam" id="TIGR01356">
    <property type="entry name" value="aroA"/>
    <property type="match status" value="1"/>
</dbReference>
<dbReference type="PANTHER" id="PTHR21090">
    <property type="entry name" value="AROM/DEHYDROQUINATE SYNTHASE"/>
    <property type="match status" value="1"/>
</dbReference>
<dbReference type="PANTHER" id="PTHR21090:SF5">
    <property type="entry name" value="PENTAFUNCTIONAL AROM POLYPEPTIDE"/>
    <property type="match status" value="1"/>
</dbReference>
<dbReference type="Pfam" id="PF00275">
    <property type="entry name" value="EPSP_synthase"/>
    <property type="match status" value="1"/>
</dbReference>
<dbReference type="PIRSF" id="PIRSF000505">
    <property type="entry name" value="EPSPS"/>
    <property type="match status" value="1"/>
</dbReference>
<dbReference type="SUPFAM" id="SSF55205">
    <property type="entry name" value="EPT/RTPC-like"/>
    <property type="match status" value="1"/>
</dbReference>
<dbReference type="PROSITE" id="PS00104">
    <property type="entry name" value="EPSP_SYNTHASE_1"/>
    <property type="match status" value="1"/>
</dbReference>
<dbReference type="PROSITE" id="PS00885">
    <property type="entry name" value="EPSP_SYNTHASE_2"/>
    <property type="match status" value="1"/>
</dbReference>
<comment type="function">
    <text evidence="1">Catalyzes the transfer of the enolpyruvyl moiety of phosphoenolpyruvate (PEP) to the 5-hydroxyl of shikimate-3-phosphate (S3P) to produce enolpyruvyl shikimate-3-phosphate and inorganic phosphate.</text>
</comment>
<comment type="catalytic activity">
    <reaction evidence="1">
        <text>3-phosphoshikimate + phosphoenolpyruvate = 5-O-(1-carboxyvinyl)-3-phosphoshikimate + phosphate</text>
        <dbReference type="Rhea" id="RHEA:21256"/>
        <dbReference type="ChEBI" id="CHEBI:43474"/>
        <dbReference type="ChEBI" id="CHEBI:57701"/>
        <dbReference type="ChEBI" id="CHEBI:58702"/>
        <dbReference type="ChEBI" id="CHEBI:145989"/>
        <dbReference type="EC" id="2.5.1.19"/>
    </reaction>
    <physiologicalReaction direction="left-to-right" evidence="1">
        <dbReference type="Rhea" id="RHEA:21257"/>
    </physiologicalReaction>
</comment>
<comment type="pathway">
    <text evidence="1">Metabolic intermediate biosynthesis; chorismate biosynthesis; chorismate from D-erythrose 4-phosphate and phosphoenolpyruvate: step 6/7.</text>
</comment>
<comment type="subunit">
    <text evidence="1">Monomer.</text>
</comment>
<comment type="subcellular location">
    <subcellularLocation>
        <location evidence="1">Cytoplasm</location>
    </subcellularLocation>
</comment>
<comment type="similarity">
    <text evidence="1">Belongs to the EPSP synthase family.</text>
</comment>
<accession>B8DC03</accession>
<organism>
    <name type="scientific">Listeria monocytogenes serotype 4a (strain HCC23)</name>
    <dbReference type="NCBI Taxonomy" id="552536"/>
    <lineage>
        <taxon>Bacteria</taxon>
        <taxon>Bacillati</taxon>
        <taxon>Bacillota</taxon>
        <taxon>Bacilli</taxon>
        <taxon>Bacillales</taxon>
        <taxon>Listeriaceae</taxon>
        <taxon>Listeria</taxon>
    </lineage>
</organism>
<name>AROA_LISMH</name>
<gene>
    <name evidence="1" type="primary">aroA</name>
    <name type="ordered locus">LMHCC_0633</name>
</gene>
<protein>
    <recommendedName>
        <fullName evidence="1">3-phosphoshikimate 1-carboxyvinyltransferase</fullName>
        <ecNumber evidence="1">2.5.1.19</ecNumber>
    </recommendedName>
    <alternativeName>
        <fullName evidence="1">5-enolpyruvylshikimate-3-phosphate synthase</fullName>
        <shortName evidence="1">EPSP synthase</shortName>
        <shortName evidence="1">EPSPS</shortName>
    </alternativeName>
</protein>
<reference key="1">
    <citation type="journal article" date="2011" name="J. Bacteriol.">
        <title>Genome sequence of lineage III Listeria monocytogenes strain HCC23.</title>
        <authorList>
            <person name="Steele C.L."/>
            <person name="Donaldson J.R."/>
            <person name="Paul D."/>
            <person name="Banes M.M."/>
            <person name="Arick T."/>
            <person name="Bridges S.M."/>
            <person name="Lawrence M.L."/>
        </authorList>
    </citation>
    <scope>NUCLEOTIDE SEQUENCE [LARGE SCALE GENOMIC DNA]</scope>
    <source>
        <strain>HCC23</strain>
    </source>
</reference>
<proteinExistence type="inferred from homology"/>
<sequence length="428" mass="46000">MKLITNKQGLVGAITVPGDKSMSHRSIMFGAIAEGKTVIRHFLRADDCLGTIKAFKALGVKIEETEEEIIVHGTGFDGLKQADGPLDIGNSGTTIRLMMGILAGRDFDTVILGDESIAKRPMNRVMLPLQQMGAKMHGKDGSEFAPITINGKQSLKRMEYHMPVASAQVKSAIIFAALQAEGETIIHEKEKTRDHTEHMIRQFGGEIEMDGLTIRVKGGQTFTGQEMTVPGDVSSAAFFIVAGLITPGSEIELTHVGLNPTRTGIFDVVEQMGGSLVVKDSSRSTGKLAGTVVVKTSDLKGTEIGGDIIPRLIDEIPVIALLATQAEGTTIIKDAAELKVKETNRIDAVATELNKMGADITPTEDGLIIRGKTPLHAANVTSYGDHRIGMMLQIAALLVEEGDVELERAEAVSVSYPTFFEDIRSLLK</sequence>